<protein>
    <recommendedName>
        <fullName evidence="1">Small ribosomal subunit biogenesis GTPase RsgA</fullName>
        <ecNumber evidence="1">3.6.1.-</ecNumber>
    </recommendedName>
</protein>
<dbReference type="EC" id="3.6.1.-" evidence="1"/>
<dbReference type="EMBL" id="CP000764">
    <property type="protein sequence ID" value="ABS22749.1"/>
    <property type="molecule type" value="Genomic_DNA"/>
</dbReference>
<dbReference type="RefSeq" id="WP_012094955.1">
    <property type="nucleotide sequence ID" value="NC_009674.1"/>
</dbReference>
<dbReference type="SMR" id="A7GRJ1"/>
<dbReference type="STRING" id="315749.Bcer98_2513"/>
<dbReference type="GeneID" id="33897769"/>
<dbReference type="KEGG" id="bcy:Bcer98_2513"/>
<dbReference type="eggNOG" id="COG1162">
    <property type="taxonomic scope" value="Bacteria"/>
</dbReference>
<dbReference type="HOGENOM" id="CLU_033617_2_1_9"/>
<dbReference type="OrthoDB" id="9809485at2"/>
<dbReference type="Proteomes" id="UP000002300">
    <property type="component" value="Chromosome"/>
</dbReference>
<dbReference type="GO" id="GO:0005737">
    <property type="term" value="C:cytoplasm"/>
    <property type="evidence" value="ECO:0007669"/>
    <property type="project" value="UniProtKB-SubCell"/>
</dbReference>
<dbReference type="GO" id="GO:0005525">
    <property type="term" value="F:GTP binding"/>
    <property type="evidence" value="ECO:0007669"/>
    <property type="project" value="UniProtKB-UniRule"/>
</dbReference>
<dbReference type="GO" id="GO:0003924">
    <property type="term" value="F:GTPase activity"/>
    <property type="evidence" value="ECO:0007669"/>
    <property type="project" value="UniProtKB-UniRule"/>
</dbReference>
<dbReference type="GO" id="GO:0046872">
    <property type="term" value="F:metal ion binding"/>
    <property type="evidence" value="ECO:0007669"/>
    <property type="project" value="UniProtKB-KW"/>
</dbReference>
<dbReference type="GO" id="GO:0019843">
    <property type="term" value="F:rRNA binding"/>
    <property type="evidence" value="ECO:0007669"/>
    <property type="project" value="UniProtKB-KW"/>
</dbReference>
<dbReference type="GO" id="GO:0042274">
    <property type="term" value="P:ribosomal small subunit biogenesis"/>
    <property type="evidence" value="ECO:0007669"/>
    <property type="project" value="UniProtKB-UniRule"/>
</dbReference>
<dbReference type="CDD" id="cd04466">
    <property type="entry name" value="S1_YloQ_GTPase"/>
    <property type="match status" value="1"/>
</dbReference>
<dbReference type="CDD" id="cd01854">
    <property type="entry name" value="YjeQ_EngC"/>
    <property type="match status" value="1"/>
</dbReference>
<dbReference type="Gene3D" id="2.40.50.140">
    <property type="entry name" value="Nucleic acid-binding proteins"/>
    <property type="match status" value="1"/>
</dbReference>
<dbReference type="Gene3D" id="3.40.50.300">
    <property type="entry name" value="P-loop containing nucleotide triphosphate hydrolases"/>
    <property type="match status" value="1"/>
</dbReference>
<dbReference type="Gene3D" id="1.10.40.50">
    <property type="entry name" value="Probable gtpase engc, domain 3"/>
    <property type="match status" value="1"/>
</dbReference>
<dbReference type="HAMAP" id="MF_01820">
    <property type="entry name" value="GTPase_RsgA"/>
    <property type="match status" value="1"/>
</dbReference>
<dbReference type="InterPro" id="IPR030378">
    <property type="entry name" value="G_CP_dom"/>
</dbReference>
<dbReference type="InterPro" id="IPR012340">
    <property type="entry name" value="NA-bd_OB-fold"/>
</dbReference>
<dbReference type="InterPro" id="IPR027417">
    <property type="entry name" value="P-loop_NTPase"/>
</dbReference>
<dbReference type="InterPro" id="IPR004881">
    <property type="entry name" value="Ribosome_biogen_GTPase_RsgA"/>
</dbReference>
<dbReference type="InterPro" id="IPR010914">
    <property type="entry name" value="RsgA_GTPase_dom"/>
</dbReference>
<dbReference type="InterPro" id="IPR031944">
    <property type="entry name" value="RsgA_N"/>
</dbReference>
<dbReference type="NCBIfam" id="TIGR00157">
    <property type="entry name" value="ribosome small subunit-dependent GTPase A"/>
    <property type="match status" value="1"/>
</dbReference>
<dbReference type="PANTHER" id="PTHR32120">
    <property type="entry name" value="SMALL RIBOSOMAL SUBUNIT BIOGENESIS GTPASE RSGA"/>
    <property type="match status" value="1"/>
</dbReference>
<dbReference type="PANTHER" id="PTHR32120:SF11">
    <property type="entry name" value="SMALL RIBOSOMAL SUBUNIT BIOGENESIS GTPASE RSGA 1, MITOCHONDRIAL-RELATED"/>
    <property type="match status" value="1"/>
</dbReference>
<dbReference type="Pfam" id="PF03193">
    <property type="entry name" value="RsgA_GTPase"/>
    <property type="match status" value="1"/>
</dbReference>
<dbReference type="Pfam" id="PF16745">
    <property type="entry name" value="RsgA_N"/>
    <property type="match status" value="1"/>
</dbReference>
<dbReference type="SUPFAM" id="SSF50249">
    <property type="entry name" value="Nucleic acid-binding proteins"/>
    <property type="match status" value="1"/>
</dbReference>
<dbReference type="SUPFAM" id="SSF52540">
    <property type="entry name" value="P-loop containing nucleoside triphosphate hydrolases"/>
    <property type="match status" value="1"/>
</dbReference>
<dbReference type="PROSITE" id="PS50936">
    <property type="entry name" value="ENGC_GTPASE"/>
    <property type="match status" value="1"/>
</dbReference>
<dbReference type="PROSITE" id="PS51721">
    <property type="entry name" value="G_CP"/>
    <property type="match status" value="1"/>
</dbReference>
<reference key="1">
    <citation type="journal article" date="2008" name="Chem. Biol. Interact.">
        <title>Extending the Bacillus cereus group genomics to putative food-borne pathogens of different toxicity.</title>
        <authorList>
            <person name="Lapidus A."/>
            <person name="Goltsman E."/>
            <person name="Auger S."/>
            <person name="Galleron N."/>
            <person name="Segurens B."/>
            <person name="Dossat C."/>
            <person name="Land M.L."/>
            <person name="Broussolle V."/>
            <person name="Brillard J."/>
            <person name="Guinebretiere M.-H."/>
            <person name="Sanchis V."/>
            <person name="Nguen-the C."/>
            <person name="Lereclus D."/>
            <person name="Richardson P."/>
            <person name="Wincker P."/>
            <person name="Weissenbach J."/>
            <person name="Ehrlich S.D."/>
            <person name="Sorokin A."/>
        </authorList>
    </citation>
    <scope>NUCLEOTIDE SEQUENCE [LARGE SCALE GENOMIC DNA]</scope>
    <source>
        <strain>DSM 22905 / CIP 110041 / 391-98 / NVH 391-98</strain>
    </source>
</reference>
<organism>
    <name type="scientific">Bacillus cytotoxicus (strain DSM 22905 / CIP 110041 / 391-98 / NVH 391-98)</name>
    <dbReference type="NCBI Taxonomy" id="315749"/>
    <lineage>
        <taxon>Bacteria</taxon>
        <taxon>Bacillati</taxon>
        <taxon>Bacillota</taxon>
        <taxon>Bacilli</taxon>
        <taxon>Bacillales</taxon>
        <taxon>Bacillaceae</taxon>
        <taxon>Bacillus</taxon>
        <taxon>Bacillus cereus group</taxon>
    </lineage>
</organism>
<name>RSGA_BACCN</name>
<keyword id="KW-0963">Cytoplasm</keyword>
<keyword id="KW-0342">GTP-binding</keyword>
<keyword id="KW-0378">Hydrolase</keyword>
<keyword id="KW-0479">Metal-binding</keyword>
<keyword id="KW-0547">Nucleotide-binding</keyword>
<keyword id="KW-0690">Ribosome biogenesis</keyword>
<keyword id="KW-0694">RNA-binding</keyword>
<keyword id="KW-0699">rRNA-binding</keyword>
<keyword id="KW-0862">Zinc</keyword>
<gene>
    <name evidence="1" type="primary">rsgA</name>
    <name type="ordered locus">Bcer98_2513</name>
</gene>
<sequence length="293" mass="33303">MPEGKIIKALSGFYYVQHEEGITQCRGRGVFRKNKITPLVGDQVVFQAENQNEGYVLEVFERKNELVRPPIANVDQAILVFSAVEPDFNPGLLDRFLVLIEYHNIKPIICISKMDLVDEPMRKMVESYANDYREMGYAVLFTSVHAAESIEILKPFLEECVSVVAGQSGVGKSSMLNVLRPDLELKTNDISSHLGRGKHTTRHVELISIGSGLVADTPGFSSLDFIDIEVEDLTFCFPELKEESQYCKFRGCTHLSEPKCAVKAAVEEGRIADYRYEHYKQFVEEIRERKPRY</sequence>
<evidence type="ECO:0000255" key="1">
    <source>
        <dbReference type="HAMAP-Rule" id="MF_01820"/>
    </source>
</evidence>
<evidence type="ECO:0000255" key="2">
    <source>
        <dbReference type="PROSITE-ProRule" id="PRU01058"/>
    </source>
</evidence>
<comment type="function">
    <text evidence="1">One of several proteins that assist in the late maturation steps of the functional core of the 30S ribosomal subunit. Helps release RbfA from mature subunits. May play a role in the assembly of ribosomal proteins into the subunit. Circularly permuted GTPase that catalyzes slow GTP hydrolysis, GTPase activity is stimulated by the 30S ribosomal subunit.</text>
</comment>
<comment type="cofactor">
    <cofactor evidence="1">
        <name>Zn(2+)</name>
        <dbReference type="ChEBI" id="CHEBI:29105"/>
    </cofactor>
    <text evidence="1">Binds 1 zinc ion per subunit.</text>
</comment>
<comment type="subunit">
    <text evidence="1">Monomer. Associates with 30S ribosomal subunit, binds 16S rRNA.</text>
</comment>
<comment type="subcellular location">
    <subcellularLocation>
        <location evidence="1">Cytoplasm</location>
    </subcellularLocation>
</comment>
<comment type="similarity">
    <text evidence="1">Belongs to the TRAFAC class YlqF/YawG GTPase family. RsgA subfamily.</text>
</comment>
<proteinExistence type="inferred from homology"/>
<feature type="chain" id="PRO_1000188030" description="Small ribosomal subunit biogenesis GTPase RsgA">
    <location>
        <begin position="1"/>
        <end position="293"/>
    </location>
</feature>
<feature type="domain" description="CP-type G" evidence="2">
    <location>
        <begin position="63"/>
        <end position="223"/>
    </location>
</feature>
<feature type="binding site" evidence="1">
    <location>
        <begin position="112"/>
        <end position="115"/>
    </location>
    <ligand>
        <name>GTP</name>
        <dbReference type="ChEBI" id="CHEBI:37565"/>
    </ligand>
</feature>
<feature type="binding site" evidence="1">
    <location>
        <begin position="166"/>
        <end position="174"/>
    </location>
    <ligand>
        <name>GTP</name>
        <dbReference type="ChEBI" id="CHEBI:37565"/>
    </ligand>
</feature>
<feature type="binding site" evidence="1">
    <location>
        <position position="247"/>
    </location>
    <ligand>
        <name>Zn(2+)</name>
        <dbReference type="ChEBI" id="CHEBI:29105"/>
    </ligand>
</feature>
<feature type="binding site" evidence="1">
    <location>
        <position position="252"/>
    </location>
    <ligand>
        <name>Zn(2+)</name>
        <dbReference type="ChEBI" id="CHEBI:29105"/>
    </ligand>
</feature>
<feature type="binding site" evidence="1">
    <location>
        <position position="254"/>
    </location>
    <ligand>
        <name>Zn(2+)</name>
        <dbReference type="ChEBI" id="CHEBI:29105"/>
    </ligand>
</feature>
<feature type="binding site" evidence="1">
    <location>
        <position position="260"/>
    </location>
    <ligand>
        <name>Zn(2+)</name>
        <dbReference type="ChEBI" id="CHEBI:29105"/>
    </ligand>
</feature>
<accession>A7GRJ1</accession>